<comment type="function">
    <text evidence="2 3">Alpha-conotoxins act on postsynaptic membranes, they bind to the nicotinic acetylcholine receptors (nAChR) and thus inhibit them. This toxin provokes a nearly complete and slowly reversible inhibition of both the human adult (alpha-1-beta-1-epsilon-delta (CHRNA1-CHRNB1-CHRND-CHRNE)) and human fetal (alpha-1-beta-1-gamma-delta (CHRNA1-CHRNB1-CHRNG-CHRND)) neuromuscular nAChRs (PubMed:15910004, PubMed:26074268). It also reversibly blocks the neuromuscular alpha-7/CHRNA7 nAChR, the alpha-3-beta-2 (CHRNA3-CHRNB2) nAChR, the chimeric alpha-6 or -3/beta-3 or -2 (CHRNA6/CHRNA3-CHRNB2-CHRNB3) nAChR and with a low potency the alpha-4-beta-2 (CHRNA4-CHRNB2) nAChR (PubMed:15910004). In addition, the toxin also inhibits the alpha-9-alpha-10 (CHRNA9-CHRNA10) nAChR with a high potency (IC(50)=187 nM) (PubMed:26074268).</text>
</comment>
<comment type="subcellular location">
    <subcellularLocation>
        <location evidence="2">Secreted</location>
    </subcellularLocation>
</comment>
<comment type="tissue specificity">
    <text evidence="7">Expressed by the venom duct.</text>
</comment>
<comment type="domain">
    <text evidence="6">The cysteine framework is VIII (C-C-C-C-C-C-C-C-C-C).</text>
</comment>
<comment type="PTM">
    <text evidence="6">Contains 5 disulfide bonds.</text>
</comment>
<comment type="mass spectrometry" mass="5168.99" method="MALDI" evidence="2"/>
<comment type="similarity">
    <text evidence="6">Belongs to the conotoxin S superfamily.</text>
</comment>
<accession>P0C1W3</accession>
<accession>D6C4H2</accession>
<sequence length="93" mass="10383">MMSKMGAMFVLLLLFTLASSQQEGDVQARKTHPKREFQRILLRSGRKCNFDKCKGTGVYNCGESCSCEGLHSCRCTYNIGSMKSGCACICTYY</sequence>
<protein>
    <recommendedName>
        <fullName evidence="6">Alpha-conotoxin RVIIIA</fullName>
    </recommendedName>
    <alternativeName>
        <fullName evidence="4 5">AlphaS-conotoxin RVIIIA</fullName>
    </alternativeName>
</protein>
<keyword id="KW-0008">Acetylcholine receptor inhibiting toxin</keyword>
<keyword id="KW-0903">Direct protein sequencing</keyword>
<keyword id="KW-1015">Disulfide bond</keyword>
<keyword id="KW-0301">Gamma-carboxyglutamic acid</keyword>
<keyword id="KW-0872">Ion channel impairing toxin</keyword>
<keyword id="KW-0528">Neurotoxin</keyword>
<keyword id="KW-0629">Postsynaptic neurotoxin</keyword>
<keyword id="KW-0964">Secreted</keyword>
<keyword id="KW-0732">Signal</keyword>
<keyword id="KW-0800">Toxin</keyword>
<feature type="signal peptide" evidence="1">
    <location>
        <begin position="1"/>
        <end position="20"/>
    </location>
</feature>
<feature type="propeptide" id="PRO_0000404999" evidence="2">
    <location>
        <begin position="21"/>
        <end position="46"/>
    </location>
</feature>
<feature type="peptide" id="PRO_0000249790" description="Alpha-conotoxin RVIIIA" evidence="2">
    <location>
        <begin position="47"/>
        <end position="93"/>
    </location>
</feature>
<feature type="modified residue" description="4-carboxyglutamate" evidence="2">
    <location>
        <position position="63"/>
    </location>
</feature>
<feature type="modified residue" description="4-carboxyglutamate" evidence="2">
    <location>
        <position position="68"/>
    </location>
</feature>
<name>CSA8A_CONRA</name>
<organism>
    <name type="scientific">Conus radiatus</name>
    <name type="common">Rayed cone</name>
    <dbReference type="NCBI Taxonomy" id="61198"/>
    <lineage>
        <taxon>Eukaryota</taxon>
        <taxon>Metazoa</taxon>
        <taxon>Spiralia</taxon>
        <taxon>Lophotrochozoa</taxon>
        <taxon>Mollusca</taxon>
        <taxon>Gastropoda</taxon>
        <taxon>Caenogastropoda</taxon>
        <taxon>Neogastropoda</taxon>
        <taxon>Conoidea</taxon>
        <taxon>Conidae</taxon>
        <taxon>Conus</taxon>
        <taxon>Phasmoconus</taxon>
    </lineage>
</organism>
<dbReference type="EMBL" id="FJ959114">
    <property type="protein sequence ID" value="ADB93084.1"/>
    <property type="molecule type" value="Genomic_DNA"/>
</dbReference>
<dbReference type="ConoServer" id="1574">
    <property type="toxin name" value="RVIIIA"/>
</dbReference>
<dbReference type="GO" id="GO:0005576">
    <property type="term" value="C:extracellular region"/>
    <property type="evidence" value="ECO:0007669"/>
    <property type="project" value="UniProtKB-SubCell"/>
</dbReference>
<dbReference type="GO" id="GO:0035792">
    <property type="term" value="C:host cell postsynaptic membrane"/>
    <property type="evidence" value="ECO:0007669"/>
    <property type="project" value="UniProtKB-KW"/>
</dbReference>
<dbReference type="GO" id="GO:0030550">
    <property type="term" value="F:acetylcholine receptor inhibitor activity"/>
    <property type="evidence" value="ECO:0007669"/>
    <property type="project" value="UniProtKB-KW"/>
</dbReference>
<dbReference type="GO" id="GO:0099106">
    <property type="term" value="F:ion channel regulator activity"/>
    <property type="evidence" value="ECO:0007669"/>
    <property type="project" value="UniProtKB-KW"/>
</dbReference>
<dbReference type="GO" id="GO:0090729">
    <property type="term" value="F:toxin activity"/>
    <property type="evidence" value="ECO:0007669"/>
    <property type="project" value="UniProtKB-KW"/>
</dbReference>
<evidence type="ECO:0000255" key="1"/>
<evidence type="ECO:0000269" key="2">
    <source>
    </source>
</evidence>
<evidence type="ECO:0000269" key="3">
    <source>
    </source>
</evidence>
<evidence type="ECO:0000303" key="4">
    <source>
    </source>
</evidence>
<evidence type="ECO:0000303" key="5">
    <source>
    </source>
</evidence>
<evidence type="ECO:0000305" key="6"/>
<evidence type="ECO:0000305" key="7">
    <source>
    </source>
</evidence>
<reference key="1">
    <citation type="journal article" date="2010" name="Mol. Phylogenet. Evol.">
        <title>Evolution of Conus peptide toxins: analysis of Conus californicus Reeve, 1844.</title>
        <authorList>
            <person name="Biggs J.S."/>
            <person name="Watkins M."/>
            <person name="Puillandre N."/>
            <person name="Ownby J.P."/>
            <person name="Lopez-Vera E."/>
            <person name="Christensen S."/>
            <person name="Moreno K.J."/>
            <person name="Bernaldez J."/>
            <person name="Licea-Navarro A."/>
            <person name="Corneli P.S."/>
            <person name="Olivera B.M."/>
        </authorList>
    </citation>
    <scope>NUCLEOTIDE SEQUENCE [GENOMIC DNA]</scope>
</reference>
<reference key="2">
    <citation type="journal article" date="2005" name="Biochemistry">
        <title>Alpha S-conotoxin RVIIIA: a structurally unique conotoxin that broadly targets nicotinic acetylcholine receptors.</title>
        <authorList>
            <person name="Teichert R.W."/>
            <person name="Jimenez E.C."/>
            <person name="Olivera B.M."/>
        </authorList>
    </citation>
    <scope>PROTEIN SEQUENCE OF 47-93</scope>
    <scope>PARTIAL NUCLEOTIDE SEQUENCE [MRNA]</scope>
    <scope>GAMMA-CARBOXYGLUTAMATION AT GLU-63 AND GLU-68</scope>
    <scope>MASS SPECTROMETRY</scope>
    <scope>FUNCTION</scope>
    <scope>SUBCELLULAR LOCATION</scope>
    <source>
        <tissue>Venom</tissue>
        <tissue>Venom duct</tissue>
    </source>
</reference>
<reference key="3">
    <citation type="journal article" date="2015" name="Biochem. Pharmacol.">
        <title>alphaS-conotoxin GVIIIB potently and selectively blocks alpha9alpha10 nicotinic acetylcholine receptors.</title>
        <authorList>
            <person name="Christensen S.B."/>
            <person name="Bandyopadhyay P.K."/>
            <person name="Olivera B.M."/>
            <person name="McIntosh J.M."/>
        </authorList>
    </citation>
    <scope>FUNCTION</scope>
</reference>
<proteinExistence type="evidence at protein level"/>